<protein>
    <recommendedName>
        <fullName evidence="1">Tryptophan synthase beta chain</fullName>
        <ecNumber evidence="1">4.2.1.20</ecNumber>
    </recommendedName>
</protein>
<proteinExistence type="inferred from homology"/>
<dbReference type="EC" id="4.2.1.20" evidence="1"/>
<dbReference type="EMBL" id="BA000040">
    <property type="protein sequence ID" value="BAC46010.1"/>
    <property type="molecule type" value="Genomic_DNA"/>
</dbReference>
<dbReference type="RefSeq" id="NP_767385.1">
    <property type="nucleotide sequence ID" value="NC_004463.1"/>
</dbReference>
<dbReference type="RefSeq" id="WP_011083569.1">
    <property type="nucleotide sequence ID" value="NC_004463.1"/>
</dbReference>
<dbReference type="SMR" id="Q89WE5"/>
<dbReference type="FunCoup" id="Q89WE5">
    <property type="interactions" value="707"/>
</dbReference>
<dbReference type="STRING" id="224911.AAV28_00575"/>
<dbReference type="EnsemblBacteria" id="BAC46010">
    <property type="protein sequence ID" value="BAC46010"/>
    <property type="gene ID" value="BAC46010"/>
</dbReference>
<dbReference type="GeneID" id="46488021"/>
<dbReference type="KEGG" id="bja:blr0745"/>
<dbReference type="PATRIC" id="fig|224911.44.peg.119"/>
<dbReference type="eggNOG" id="COG0133">
    <property type="taxonomic scope" value="Bacteria"/>
</dbReference>
<dbReference type="HOGENOM" id="CLU_016734_3_1_5"/>
<dbReference type="InParanoid" id="Q89WE5"/>
<dbReference type="OrthoDB" id="9766131at2"/>
<dbReference type="PhylomeDB" id="Q89WE5"/>
<dbReference type="UniPathway" id="UPA00035">
    <property type="reaction ID" value="UER00044"/>
</dbReference>
<dbReference type="Proteomes" id="UP000002526">
    <property type="component" value="Chromosome"/>
</dbReference>
<dbReference type="GO" id="GO:0005737">
    <property type="term" value="C:cytoplasm"/>
    <property type="evidence" value="ECO:0000318"/>
    <property type="project" value="GO_Central"/>
</dbReference>
<dbReference type="GO" id="GO:0004834">
    <property type="term" value="F:tryptophan synthase activity"/>
    <property type="evidence" value="ECO:0007669"/>
    <property type="project" value="UniProtKB-UniRule"/>
</dbReference>
<dbReference type="GO" id="GO:0000162">
    <property type="term" value="P:L-tryptophan biosynthetic process"/>
    <property type="evidence" value="ECO:0000318"/>
    <property type="project" value="GO_Central"/>
</dbReference>
<dbReference type="CDD" id="cd06446">
    <property type="entry name" value="Trp-synth_B"/>
    <property type="match status" value="1"/>
</dbReference>
<dbReference type="FunFam" id="3.40.50.1100:FF:000001">
    <property type="entry name" value="Tryptophan synthase beta chain"/>
    <property type="match status" value="1"/>
</dbReference>
<dbReference type="FunFam" id="3.40.50.1100:FF:000004">
    <property type="entry name" value="Tryptophan synthase beta chain"/>
    <property type="match status" value="1"/>
</dbReference>
<dbReference type="Gene3D" id="3.40.50.1100">
    <property type="match status" value="2"/>
</dbReference>
<dbReference type="HAMAP" id="MF_00133">
    <property type="entry name" value="Trp_synth_beta"/>
    <property type="match status" value="1"/>
</dbReference>
<dbReference type="InterPro" id="IPR006653">
    <property type="entry name" value="Trp_synth_b_CS"/>
</dbReference>
<dbReference type="InterPro" id="IPR006654">
    <property type="entry name" value="Trp_synth_beta"/>
</dbReference>
<dbReference type="InterPro" id="IPR023026">
    <property type="entry name" value="Trp_synth_beta/beta-like"/>
</dbReference>
<dbReference type="InterPro" id="IPR001926">
    <property type="entry name" value="TrpB-like_PALP"/>
</dbReference>
<dbReference type="InterPro" id="IPR036052">
    <property type="entry name" value="TrpB-like_PALP_sf"/>
</dbReference>
<dbReference type="NCBIfam" id="TIGR00263">
    <property type="entry name" value="trpB"/>
    <property type="match status" value="1"/>
</dbReference>
<dbReference type="PANTHER" id="PTHR48077:SF3">
    <property type="entry name" value="TRYPTOPHAN SYNTHASE"/>
    <property type="match status" value="1"/>
</dbReference>
<dbReference type="PANTHER" id="PTHR48077">
    <property type="entry name" value="TRYPTOPHAN SYNTHASE-RELATED"/>
    <property type="match status" value="1"/>
</dbReference>
<dbReference type="Pfam" id="PF00291">
    <property type="entry name" value="PALP"/>
    <property type="match status" value="1"/>
</dbReference>
<dbReference type="PIRSF" id="PIRSF001413">
    <property type="entry name" value="Trp_syn_beta"/>
    <property type="match status" value="1"/>
</dbReference>
<dbReference type="SUPFAM" id="SSF53686">
    <property type="entry name" value="Tryptophan synthase beta subunit-like PLP-dependent enzymes"/>
    <property type="match status" value="1"/>
</dbReference>
<dbReference type="PROSITE" id="PS00168">
    <property type="entry name" value="TRP_SYNTHASE_BETA"/>
    <property type="match status" value="1"/>
</dbReference>
<evidence type="ECO:0000255" key="1">
    <source>
        <dbReference type="HAMAP-Rule" id="MF_00133"/>
    </source>
</evidence>
<comment type="function">
    <text evidence="1">The beta subunit is responsible for the synthesis of L-tryptophan from indole and L-serine.</text>
</comment>
<comment type="catalytic activity">
    <reaction evidence="1">
        <text>(1S,2R)-1-C-(indol-3-yl)glycerol 3-phosphate + L-serine = D-glyceraldehyde 3-phosphate + L-tryptophan + H2O</text>
        <dbReference type="Rhea" id="RHEA:10532"/>
        <dbReference type="ChEBI" id="CHEBI:15377"/>
        <dbReference type="ChEBI" id="CHEBI:33384"/>
        <dbReference type="ChEBI" id="CHEBI:57912"/>
        <dbReference type="ChEBI" id="CHEBI:58866"/>
        <dbReference type="ChEBI" id="CHEBI:59776"/>
        <dbReference type="EC" id="4.2.1.20"/>
    </reaction>
</comment>
<comment type="cofactor">
    <cofactor evidence="1">
        <name>pyridoxal 5'-phosphate</name>
        <dbReference type="ChEBI" id="CHEBI:597326"/>
    </cofactor>
</comment>
<comment type="pathway">
    <text evidence="1">Amino-acid biosynthesis; L-tryptophan biosynthesis; L-tryptophan from chorismate: step 5/5.</text>
</comment>
<comment type="subunit">
    <text evidence="1">Tetramer of two alpha and two beta chains.</text>
</comment>
<comment type="similarity">
    <text evidence="1">Belongs to the TrpB family.</text>
</comment>
<reference key="1">
    <citation type="journal article" date="2002" name="DNA Res.">
        <title>Complete genomic sequence of nitrogen-fixing symbiotic bacterium Bradyrhizobium japonicum USDA110.</title>
        <authorList>
            <person name="Kaneko T."/>
            <person name="Nakamura Y."/>
            <person name="Sato S."/>
            <person name="Minamisawa K."/>
            <person name="Uchiumi T."/>
            <person name="Sasamoto S."/>
            <person name="Watanabe A."/>
            <person name="Idesawa K."/>
            <person name="Iriguchi M."/>
            <person name="Kawashima K."/>
            <person name="Kohara M."/>
            <person name="Matsumoto M."/>
            <person name="Shimpo S."/>
            <person name="Tsuruoka H."/>
            <person name="Wada T."/>
            <person name="Yamada M."/>
            <person name="Tabata S."/>
        </authorList>
    </citation>
    <scope>NUCLEOTIDE SEQUENCE [LARGE SCALE GENOMIC DNA]</scope>
    <source>
        <strain>JCM 10833 / BCRC 13528 / IAM 13628 / NBRC 14792 / USDA 110</strain>
    </source>
</reference>
<name>TRPB_BRADU</name>
<accession>Q89WE5</accession>
<keyword id="KW-0028">Amino-acid biosynthesis</keyword>
<keyword id="KW-0057">Aromatic amino acid biosynthesis</keyword>
<keyword id="KW-0456">Lyase</keyword>
<keyword id="KW-0663">Pyridoxal phosphate</keyword>
<keyword id="KW-1185">Reference proteome</keyword>
<keyword id="KW-0822">Tryptophan biosynthesis</keyword>
<sequence>MNIAKPNSYRSGPDERGHFGIFGGRFVAETLMPLILDLEKAYTAAKADPAFQAEMNGYLKNYVGRPSPLYFAERLTEHLGGAKIYLKREELNHTGSHKVNNVLGQIMLARRMGKKRIIAETGAGQHGVATATLCARFGLECVVYMGAVDVERQQPNVIRMEMLGAKVVPVQSGTRTLKDAMNEALRDWVTNVHNTFYCIGTVAGPHPYPTLVRDFQSIIGNETKAQMQEVEGRLPDSLVACIGGGSNAMGLFHPFLDDPSVEIFGVEAAGHGLTQLHAASIAGGRPGVLHGNRTYLLMDADGQIQDAHSISAGLDYPGIGPEHSWLHEIGRVNYLSATDDEALAAFQLLSKLEGIIPALEPAHAIAKVMELAPKRAKDHLMVVNLSGRGDKDVPQVGDILRGKSK</sequence>
<organism>
    <name type="scientific">Bradyrhizobium diazoefficiens (strain JCM 10833 / BCRC 13528 / IAM 13628 / NBRC 14792 / USDA 110)</name>
    <dbReference type="NCBI Taxonomy" id="224911"/>
    <lineage>
        <taxon>Bacteria</taxon>
        <taxon>Pseudomonadati</taxon>
        <taxon>Pseudomonadota</taxon>
        <taxon>Alphaproteobacteria</taxon>
        <taxon>Hyphomicrobiales</taxon>
        <taxon>Nitrobacteraceae</taxon>
        <taxon>Bradyrhizobium</taxon>
    </lineage>
</organism>
<gene>
    <name evidence="1" type="primary">trpB</name>
    <name type="ordered locus">blr0745</name>
</gene>
<feature type="chain" id="PRO_0000098923" description="Tryptophan synthase beta chain">
    <location>
        <begin position="1"/>
        <end position="405"/>
    </location>
</feature>
<feature type="modified residue" description="N6-(pyridoxal phosphate)lysine" evidence="1">
    <location>
        <position position="98"/>
    </location>
</feature>